<organism>
    <name type="scientific">Sulfurisphaera tokodaii (strain DSM 16993 / JCM 10545 / NBRC 100140 / 7)</name>
    <name type="common">Sulfolobus tokodaii</name>
    <dbReference type="NCBI Taxonomy" id="273063"/>
    <lineage>
        <taxon>Archaea</taxon>
        <taxon>Thermoproteota</taxon>
        <taxon>Thermoprotei</taxon>
        <taxon>Sulfolobales</taxon>
        <taxon>Sulfolobaceae</taxon>
        <taxon>Sulfurisphaera</taxon>
    </lineage>
</organism>
<feature type="chain" id="PRO_0000134456" description="Isopentenyl-diphosphate delta-isomerase">
    <location>
        <begin position="1"/>
        <end position="369"/>
    </location>
</feature>
<feature type="binding site" evidence="1">
    <location>
        <begin position="9"/>
        <end position="10"/>
    </location>
    <ligand>
        <name>substrate</name>
    </ligand>
</feature>
<feature type="binding site" evidence="1">
    <location>
        <position position="65"/>
    </location>
    <ligand>
        <name>FMN</name>
        <dbReference type="ChEBI" id="CHEBI:58210"/>
    </ligand>
</feature>
<feature type="binding site" evidence="1">
    <location>
        <begin position="66"/>
        <end position="68"/>
    </location>
    <ligand>
        <name>FMN</name>
        <dbReference type="ChEBI" id="CHEBI:58210"/>
    </ligand>
</feature>
<feature type="binding site" evidence="1">
    <location>
        <begin position="96"/>
        <end position="98"/>
    </location>
    <ligand>
        <name>substrate</name>
    </ligand>
</feature>
<feature type="binding site" evidence="1">
    <location>
        <position position="96"/>
    </location>
    <ligand>
        <name>FMN</name>
        <dbReference type="ChEBI" id="CHEBI:58210"/>
    </ligand>
</feature>
<feature type="binding site" evidence="1">
    <location>
        <position position="125"/>
    </location>
    <ligand>
        <name>FMN</name>
        <dbReference type="ChEBI" id="CHEBI:58210"/>
    </ligand>
</feature>
<feature type="binding site" evidence="1">
    <location>
        <position position="160"/>
    </location>
    <ligand>
        <name>substrate</name>
    </ligand>
</feature>
<feature type="binding site" evidence="1">
    <location>
        <position position="161"/>
    </location>
    <ligand>
        <name>Mg(2+)</name>
        <dbReference type="ChEBI" id="CHEBI:18420"/>
    </ligand>
</feature>
<feature type="binding site" evidence="1">
    <location>
        <position position="193"/>
    </location>
    <ligand>
        <name>FMN</name>
        <dbReference type="ChEBI" id="CHEBI:58210"/>
    </ligand>
</feature>
<feature type="binding site" evidence="1">
    <location>
        <position position="218"/>
    </location>
    <ligand>
        <name>FMN</name>
        <dbReference type="ChEBI" id="CHEBI:58210"/>
    </ligand>
</feature>
<feature type="binding site" evidence="1">
    <location>
        <position position="223"/>
    </location>
    <ligand>
        <name>FMN</name>
        <dbReference type="ChEBI" id="CHEBI:58210"/>
    </ligand>
</feature>
<feature type="binding site" evidence="1">
    <location>
        <begin position="275"/>
        <end position="277"/>
    </location>
    <ligand>
        <name>FMN</name>
        <dbReference type="ChEBI" id="CHEBI:58210"/>
    </ligand>
</feature>
<feature type="binding site" evidence="1">
    <location>
        <begin position="296"/>
        <end position="297"/>
    </location>
    <ligand>
        <name>FMN</name>
        <dbReference type="ChEBI" id="CHEBI:58210"/>
    </ligand>
</feature>
<evidence type="ECO:0000255" key="1">
    <source>
        <dbReference type="HAMAP-Rule" id="MF_00354"/>
    </source>
</evidence>
<accession>Q96YW9</accession>
<reference key="1">
    <citation type="journal article" date="2001" name="DNA Res.">
        <title>Complete genome sequence of an aerobic thermoacidophilic Crenarchaeon, Sulfolobus tokodaii strain7.</title>
        <authorList>
            <person name="Kawarabayasi Y."/>
            <person name="Hino Y."/>
            <person name="Horikawa H."/>
            <person name="Jin-no K."/>
            <person name="Takahashi M."/>
            <person name="Sekine M."/>
            <person name="Baba S."/>
            <person name="Ankai A."/>
            <person name="Kosugi H."/>
            <person name="Hosoyama A."/>
            <person name="Fukui S."/>
            <person name="Nagai Y."/>
            <person name="Nishijima K."/>
            <person name="Otsuka R."/>
            <person name="Nakazawa H."/>
            <person name="Takamiya M."/>
            <person name="Kato Y."/>
            <person name="Yoshizawa T."/>
            <person name="Tanaka T."/>
            <person name="Kudoh Y."/>
            <person name="Yamazaki J."/>
            <person name="Kushida N."/>
            <person name="Oguchi A."/>
            <person name="Aoki K."/>
            <person name="Masuda S."/>
            <person name="Yanagii M."/>
            <person name="Nishimura M."/>
            <person name="Yamagishi A."/>
            <person name="Oshima T."/>
            <person name="Kikuchi H."/>
        </authorList>
    </citation>
    <scope>NUCLEOTIDE SEQUENCE [LARGE SCALE GENOMIC DNA]</scope>
    <source>
        <strain>DSM 16993 / JCM 10545 / NBRC 100140 / 7</strain>
    </source>
</reference>
<sequence length="369" mass="40387">MKNISITNRKIEHVEICLYENVEFGSTLFEDVTLIHQSLPGFSLADVSTTTNFLGKKMSAPIIITGMTGGLPELGKINETIAEVIEELGLGMGVGSQRIAIEKKETKETFSIVRKKAPNSPIIANLGAPQFVKGYSLEQVEEAIQMIEADAIAIHFNSAQEVFQPEGEPNYSIEILYKLIDISKSLKVPIIIKESGSGLSMEVTKMFYENGIKYFDTSGTGGTSWVSVEMYRGLRRNNWKAESAKLFLDWGIPTAASIVEVRSIAQDGTIIGSGGVRNGLEVAKAIALGADIGGFALPALKAAVKGKESLMNFLKKVIFELKVAMFLSGNKTIGELKKTPIVIGKELRNWLDSRGINLSYYDSVRKRRV</sequence>
<comment type="function">
    <text evidence="1">Involved in the biosynthesis of isoprenoids. Catalyzes the 1,3-allylic rearrangement of the homoallylic substrate isopentenyl (IPP) to its allylic isomer, dimethylallyl diphosphate (DMAPP).</text>
</comment>
<comment type="catalytic activity">
    <reaction evidence="1">
        <text>isopentenyl diphosphate = dimethylallyl diphosphate</text>
        <dbReference type="Rhea" id="RHEA:23284"/>
        <dbReference type="ChEBI" id="CHEBI:57623"/>
        <dbReference type="ChEBI" id="CHEBI:128769"/>
        <dbReference type="EC" id="5.3.3.2"/>
    </reaction>
</comment>
<comment type="cofactor">
    <cofactor evidence="1">
        <name>FMN</name>
        <dbReference type="ChEBI" id="CHEBI:58210"/>
    </cofactor>
</comment>
<comment type="cofactor">
    <cofactor evidence="1">
        <name>NADPH</name>
        <dbReference type="ChEBI" id="CHEBI:57783"/>
    </cofactor>
</comment>
<comment type="cofactor">
    <cofactor evidence="1">
        <name>Mg(2+)</name>
        <dbReference type="ChEBI" id="CHEBI:18420"/>
    </cofactor>
</comment>
<comment type="subunit">
    <text evidence="1">Homooctamer. Dimer of tetramers.</text>
</comment>
<comment type="subcellular location">
    <subcellularLocation>
        <location evidence="1">Cytoplasm</location>
    </subcellularLocation>
</comment>
<comment type="similarity">
    <text evidence="1">Belongs to the IPP isomerase type 2 family.</text>
</comment>
<protein>
    <recommendedName>
        <fullName evidence="1">Isopentenyl-diphosphate delta-isomerase</fullName>
        <shortName evidence="1">IPP isomerase</shortName>
        <ecNumber evidence="1">5.3.3.2</ecNumber>
    </recommendedName>
    <alternativeName>
        <fullName evidence="1">Isopentenyl diphosphate:dimethylallyl diphosphate isomerase</fullName>
    </alternativeName>
    <alternativeName>
        <fullName evidence="1">Isopentenyl pyrophosphate isomerase</fullName>
    </alternativeName>
    <alternativeName>
        <fullName evidence="1">Type 2 isopentenyl diphosphate isomerase</fullName>
        <shortName evidence="1">IDI-2</shortName>
    </alternativeName>
</protein>
<dbReference type="EC" id="5.3.3.2" evidence="1"/>
<dbReference type="EMBL" id="BA000023">
    <property type="protein sequence ID" value="BAB67157.1"/>
    <property type="molecule type" value="Genomic_DNA"/>
</dbReference>
<dbReference type="RefSeq" id="WP_010980133.1">
    <property type="nucleotide sequence ID" value="NC_003106.2"/>
</dbReference>
<dbReference type="SMR" id="Q96YW9"/>
<dbReference type="STRING" id="273063.STK_20590"/>
<dbReference type="GeneID" id="1460123"/>
<dbReference type="KEGG" id="sto:STK_20590"/>
<dbReference type="PATRIC" id="fig|273063.9.peg.2347"/>
<dbReference type="eggNOG" id="arCOG00613">
    <property type="taxonomic scope" value="Archaea"/>
</dbReference>
<dbReference type="OrthoDB" id="371955at2157"/>
<dbReference type="Proteomes" id="UP000001015">
    <property type="component" value="Chromosome"/>
</dbReference>
<dbReference type="GO" id="GO:0005737">
    <property type="term" value="C:cytoplasm"/>
    <property type="evidence" value="ECO:0007669"/>
    <property type="project" value="UniProtKB-SubCell"/>
</dbReference>
<dbReference type="GO" id="GO:0010181">
    <property type="term" value="F:FMN binding"/>
    <property type="evidence" value="ECO:0007669"/>
    <property type="project" value="UniProtKB-UniRule"/>
</dbReference>
<dbReference type="GO" id="GO:0004452">
    <property type="term" value="F:isopentenyl-diphosphate delta-isomerase activity"/>
    <property type="evidence" value="ECO:0007669"/>
    <property type="project" value="UniProtKB-UniRule"/>
</dbReference>
<dbReference type="GO" id="GO:0000287">
    <property type="term" value="F:magnesium ion binding"/>
    <property type="evidence" value="ECO:0007669"/>
    <property type="project" value="UniProtKB-UniRule"/>
</dbReference>
<dbReference type="GO" id="GO:0070402">
    <property type="term" value="F:NADPH binding"/>
    <property type="evidence" value="ECO:0007669"/>
    <property type="project" value="UniProtKB-UniRule"/>
</dbReference>
<dbReference type="GO" id="GO:0016491">
    <property type="term" value="F:oxidoreductase activity"/>
    <property type="evidence" value="ECO:0007669"/>
    <property type="project" value="InterPro"/>
</dbReference>
<dbReference type="GO" id="GO:0008299">
    <property type="term" value="P:isoprenoid biosynthetic process"/>
    <property type="evidence" value="ECO:0007669"/>
    <property type="project" value="UniProtKB-UniRule"/>
</dbReference>
<dbReference type="CDD" id="cd02811">
    <property type="entry name" value="IDI-2_FMN"/>
    <property type="match status" value="1"/>
</dbReference>
<dbReference type="Gene3D" id="3.20.20.70">
    <property type="entry name" value="Aldolase class I"/>
    <property type="match status" value="1"/>
</dbReference>
<dbReference type="HAMAP" id="MF_00354">
    <property type="entry name" value="Idi_2"/>
    <property type="match status" value="1"/>
</dbReference>
<dbReference type="InterPro" id="IPR013785">
    <property type="entry name" value="Aldolase_TIM"/>
</dbReference>
<dbReference type="InterPro" id="IPR000262">
    <property type="entry name" value="FMN-dep_DH"/>
</dbReference>
<dbReference type="InterPro" id="IPR011179">
    <property type="entry name" value="IPdP_isomerase"/>
</dbReference>
<dbReference type="NCBIfam" id="TIGR02151">
    <property type="entry name" value="IPP_isom_2"/>
    <property type="match status" value="1"/>
</dbReference>
<dbReference type="PANTHER" id="PTHR43665">
    <property type="entry name" value="ISOPENTENYL-DIPHOSPHATE DELTA-ISOMERASE"/>
    <property type="match status" value="1"/>
</dbReference>
<dbReference type="PANTHER" id="PTHR43665:SF1">
    <property type="entry name" value="ISOPENTENYL-DIPHOSPHATE DELTA-ISOMERASE"/>
    <property type="match status" value="1"/>
</dbReference>
<dbReference type="Pfam" id="PF01070">
    <property type="entry name" value="FMN_dh"/>
    <property type="match status" value="1"/>
</dbReference>
<dbReference type="PIRSF" id="PIRSF003314">
    <property type="entry name" value="IPP_isomerase"/>
    <property type="match status" value="1"/>
</dbReference>
<dbReference type="SMART" id="SM01240">
    <property type="entry name" value="IMPDH"/>
    <property type="match status" value="1"/>
</dbReference>
<dbReference type="SUPFAM" id="SSF51395">
    <property type="entry name" value="FMN-linked oxidoreductases"/>
    <property type="match status" value="1"/>
</dbReference>
<gene>
    <name evidence="1" type="primary">fni</name>
    <name type="ordered locus">STK_20590</name>
</gene>
<name>IDI2_SULTO</name>
<keyword id="KW-0963">Cytoplasm</keyword>
<keyword id="KW-0285">Flavoprotein</keyword>
<keyword id="KW-0288">FMN</keyword>
<keyword id="KW-0413">Isomerase</keyword>
<keyword id="KW-0414">Isoprene biosynthesis</keyword>
<keyword id="KW-0460">Magnesium</keyword>
<keyword id="KW-0479">Metal-binding</keyword>
<keyword id="KW-0521">NADP</keyword>
<keyword id="KW-1185">Reference proteome</keyword>
<proteinExistence type="inferred from homology"/>